<reference key="1">
    <citation type="submission" date="2007-05" db="EMBL/GenBank/DDBJ databases">
        <title>Complete sequence of Pseudomonas putida F1.</title>
        <authorList>
            <consortium name="US DOE Joint Genome Institute"/>
            <person name="Copeland A."/>
            <person name="Lucas S."/>
            <person name="Lapidus A."/>
            <person name="Barry K."/>
            <person name="Detter J.C."/>
            <person name="Glavina del Rio T."/>
            <person name="Hammon N."/>
            <person name="Israni S."/>
            <person name="Dalin E."/>
            <person name="Tice H."/>
            <person name="Pitluck S."/>
            <person name="Chain P."/>
            <person name="Malfatti S."/>
            <person name="Shin M."/>
            <person name="Vergez L."/>
            <person name="Schmutz J."/>
            <person name="Larimer F."/>
            <person name="Land M."/>
            <person name="Hauser L."/>
            <person name="Kyrpides N."/>
            <person name="Lykidis A."/>
            <person name="Parales R."/>
            <person name="Richardson P."/>
        </authorList>
    </citation>
    <scope>NUCLEOTIDE SEQUENCE [LARGE SCALE GENOMIC DNA]</scope>
    <source>
        <strain>ATCC 700007 / DSM 6899 / JCM 31910 / BCRC 17059 / LMG 24140 / F1</strain>
    </source>
</reference>
<keyword id="KW-0004">4Fe-4S</keyword>
<keyword id="KW-0963">Cytoplasm</keyword>
<keyword id="KW-0408">Iron</keyword>
<keyword id="KW-0411">Iron-sulfur</keyword>
<keyword id="KW-0479">Metal-binding</keyword>
<keyword id="KW-0949">S-adenosyl-L-methionine</keyword>
<keyword id="KW-0808">Transferase</keyword>
<protein>
    <recommendedName>
        <fullName evidence="1">Ribosomal protein uS12 methylthiotransferase RimO</fullName>
        <shortName evidence="1">uS12 MTTase</shortName>
        <shortName evidence="1">uS12 methylthiotransferase</shortName>
        <ecNumber evidence="1">2.8.4.4</ecNumber>
    </recommendedName>
    <alternativeName>
        <fullName evidence="1">Ribosomal protein uS12 (aspartate-C(3))-methylthiotransferase</fullName>
    </alternativeName>
    <alternativeName>
        <fullName evidence="1">Ribosome maturation factor RimO</fullName>
    </alternativeName>
</protein>
<proteinExistence type="inferred from homology"/>
<sequence length="443" mass="49321">MSTTPATPKVGFVSLGCPKALVDSERILTQLRMEGYEVVPTYEDADVVVVNTCGFIDSAKAESLEVIGEAIKENGKVIVTGCMGVEEGSIRDVHPSVLSVTGPQQYEQVVNAVHEVVPPRQDHNPLIDLVPPQGVKLTPRHYAYLKISEGCNHSCSFCIIPSMRGKLVSRPVGEVLSEAERLVKAGVKEILVISQDTSAYGVDVKYKTDFWNGRPVKTRMLELCEALSSLGAWVRLHYVYPYPNVDDVIPLMAAGKILPYLDIPFQHASPKVLKSMKRPAFEDRTLARIKNWREQCPELVIRSTFIVGFPGETEEDFQYLLDWLTEAQLDRVGCFQYSPVEGAPANDLGLAEVPDDVKQERWDRFMAHQQAISAARLQLRIGKEIDVLIDEVEEQGSVGRSFFDAPEIDGSVFIDGDHGFKPGDKVRCRVVDADEYDMWAEPI</sequence>
<organism>
    <name type="scientific">Pseudomonas putida (strain ATCC 700007 / DSM 6899 / JCM 31910 / BCRC 17059 / LMG 24140 / F1)</name>
    <dbReference type="NCBI Taxonomy" id="351746"/>
    <lineage>
        <taxon>Bacteria</taxon>
        <taxon>Pseudomonadati</taxon>
        <taxon>Pseudomonadota</taxon>
        <taxon>Gammaproteobacteria</taxon>
        <taxon>Pseudomonadales</taxon>
        <taxon>Pseudomonadaceae</taxon>
        <taxon>Pseudomonas</taxon>
    </lineage>
</organism>
<evidence type="ECO:0000255" key="1">
    <source>
        <dbReference type="HAMAP-Rule" id="MF_01865"/>
    </source>
</evidence>
<evidence type="ECO:0000255" key="2">
    <source>
        <dbReference type="PROSITE-ProRule" id="PRU01266"/>
    </source>
</evidence>
<dbReference type="EC" id="2.8.4.4" evidence="1"/>
<dbReference type="EMBL" id="CP000712">
    <property type="protein sequence ID" value="ABQ77389.1"/>
    <property type="molecule type" value="Genomic_DNA"/>
</dbReference>
<dbReference type="SMR" id="A5VZS9"/>
<dbReference type="KEGG" id="ppf:Pput_1228"/>
<dbReference type="eggNOG" id="COG0621">
    <property type="taxonomic scope" value="Bacteria"/>
</dbReference>
<dbReference type="HOGENOM" id="CLU_018697_0_0_6"/>
<dbReference type="GO" id="GO:0005829">
    <property type="term" value="C:cytosol"/>
    <property type="evidence" value="ECO:0007669"/>
    <property type="project" value="TreeGrafter"/>
</dbReference>
<dbReference type="GO" id="GO:0051539">
    <property type="term" value="F:4 iron, 4 sulfur cluster binding"/>
    <property type="evidence" value="ECO:0007669"/>
    <property type="project" value="UniProtKB-UniRule"/>
</dbReference>
<dbReference type="GO" id="GO:0035599">
    <property type="term" value="F:aspartic acid methylthiotransferase activity"/>
    <property type="evidence" value="ECO:0007669"/>
    <property type="project" value="TreeGrafter"/>
</dbReference>
<dbReference type="GO" id="GO:0046872">
    <property type="term" value="F:metal ion binding"/>
    <property type="evidence" value="ECO:0007669"/>
    <property type="project" value="UniProtKB-KW"/>
</dbReference>
<dbReference type="GO" id="GO:0103039">
    <property type="term" value="F:protein methylthiotransferase activity"/>
    <property type="evidence" value="ECO:0007669"/>
    <property type="project" value="UniProtKB-EC"/>
</dbReference>
<dbReference type="GO" id="GO:0006400">
    <property type="term" value="P:tRNA modification"/>
    <property type="evidence" value="ECO:0007669"/>
    <property type="project" value="InterPro"/>
</dbReference>
<dbReference type="CDD" id="cd01335">
    <property type="entry name" value="Radical_SAM"/>
    <property type="match status" value="1"/>
</dbReference>
<dbReference type="FunFam" id="2.40.50.140:FF:000060">
    <property type="entry name" value="Ribosomal protein S12 methylthiotransferase RimO"/>
    <property type="match status" value="1"/>
</dbReference>
<dbReference type="FunFam" id="3.40.50.12160:FF:000002">
    <property type="entry name" value="Ribosomal protein S12 methylthiotransferase RimO"/>
    <property type="match status" value="1"/>
</dbReference>
<dbReference type="FunFam" id="3.80.30.20:FF:000001">
    <property type="entry name" value="tRNA-2-methylthio-N(6)-dimethylallyladenosine synthase 2"/>
    <property type="match status" value="1"/>
</dbReference>
<dbReference type="Gene3D" id="3.40.50.12160">
    <property type="entry name" value="Methylthiotransferase, N-terminal domain"/>
    <property type="match status" value="1"/>
</dbReference>
<dbReference type="Gene3D" id="2.40.50.140">
    <property type="entry name" value="Nucleic acid-binding proteins"/>
    <property type="match status" value="1"/>
</dbReference>
<dbReference type="Gene3D" id="3.80.30.20">
    <property type="entry name" value="tm_1862 like domain"/>
    <property type="match status" value="1"/>
</dbReference>
<dbReference type="HAMAP" id="MF_01865">
    <property type="entry name" value="MTTase_RimO"/>
    <property type="match status" value="1"/>
</dbReference>
<dbReference type="InterPro" id="IPR006638">
    <property type="entry name" value="Elp3/MiaA/NifB-like_rSAM"/>
</dbReference>
<dbReference type="InterPro" id="IPR005839">
    <property type="entry name" value="Methylthiotransferase"/>
</dbReference>
<dbReference type="InterPro" id="IPR020612">
    <property type="entry name" value="Methylthiotransferase_CS"/>
</dbReference>
<dbReference type="InterPro" id="IPR013848">
    <property type="entry name" value="Methylthiotransferase_N"/>
</dbReference>
<dbReference type="InterPro" id="IPR038135">
    <property type="entry name" value="Methylthiotransferase_N_sf"/>
</dbReference>
<dbReference type="InterPro" id="IPR012340">
    <property type="entry name" value="NA-bd_OB-fold"/>
</dbReference>
<dbReference type="InterPro" id="IPR005840">
    <property type="entry name" value="Ribosomal_uS12_MeSTrfase_RimO"/>
</dbReference>
<dbReference type="InterPro" id="IPR007197">
    <property type="entry name" value="rSAM"/>
</dbReference>
<dbReference type="InterPro" id="IPR023404">
    <property type="entry name" value="rSAM_horseshoe"/>
</dbReference>
<dbReference type="InterPro" id="IPR002792">
    <property type="entry name" value="TRAM_dom"/>
</dbReference>
<dbReference type="NCBIfam" id="TIGR01125">
    <property type="entry name" value="30S ribosomal protein S12 methylthiotransferase RimO"/>
    <property type="match status" value="1"/>
</dbReference>
<dbReference type="NCBIfam" id="TIGR00089">
    <property type="entry name" value="MiaB/RimO family radical SAM methylthiotransferase"/>
    <property type="match status" value="1"/>
</dbReference>
<dbReference type="PANTHER" id="PTHR43837">
    <property type="entry name" value="RIBOSOMAL PROTEIN S12 METHYLTHIOTRANSFERASE RIMO"/>
    <property type="match status" value="1"/>
</dbReference>
<dbReference type="PANTHER" id="PTHR43837:SF1">
    <property type="entry name" value="RIBOSOMAL PROTEIN US12 METHYLTHIOTRANSFERASE RIMO"/>
    <property type="match status" value="1"/>
</dbReference>
<dbReference type="Pfam" id="PF04055">
    <property type="entry name" value="Radical_SAM"/>
    <property type="match status" value="1"/>
</dbReference>
<dbReference type="Pfam" id="PF18693">
    <property type="entry name" value="TRAM_2"/>
    <property type="match status" value="1"/>
</dbReference>
<dbReference type="Pfam" id="PF00919">
    <property type="entry name" value="UPF0004"/>
    <property type="match status" value="1"/>
</dbReference>
<dbReference type="SFLD" id="SFLDG01082">
    <property type="entry name" value="B12-binding_domain_containing"/>
    <property type="match status" value="1"/>
</dbReference>
<dbReference type="SFLD" id="SFLDS00029">
    <property type="entry name" value="Radical_SAM"/>
    <property type="match status" value="1"/>
</dbReference>
<dbReference type="SFLD" id="SFLDF00274">
    <property type="entry name" value="ribosomal_protein_S12_methylth"/>
    <property type="match status" value="1"/>
</dbReference>
<dbReference type="SMART" id="SM00729">
    <property type="entry name" value="Elp3"/>
    <property type="match status" value="1"/>
</dbReference>
<dbReference type="SUPFAM" id="SSF102114">
    <property type="entry name" value="Radical SAM enzymes"/>
    <property type="match status" value="1"/>
</dbReference>
<dbReference type="PROSITE" id="PS51449">
    <property type="entry name" value="MTTASE_N"/>
    <property type="match status" value="1"/>
</dbReference>
<dbReference type="PROSITE" id="PS01278">
    <property type="entry name" value="MTTASE_RADICAL"/>
    <property type="match status" value="1"/>
</dbReference>
<dbReference type="PROSITE" id="PS51918">
    <property type="entry name" value="RADICAL_SAM"/>
    <property type="match status" value="1"/>
</dbReference>
<dbReference type="PROSITE" id="PS50926">
    <property type="entry name" value="TRAM"/>
    <property type="match status" value="1"/>
</dbReference>
<feature type="chain" id="PRO_0000374948" description="Ribosomal protein uS12 methylthiotransferase RimO">
    <location>
        <begin position="1"/>
        <end position="443"/>
    </location>
</feature>
<feature type="domain" description="MTTase N-terminal" evidence="1">
    <location>
        <begin position="8"/>
        <end position="118"/>
    </location>
</feature>
<feature type="domain" description="Radical SAM core" evidence="2">
    <location>
        <begin position="137"/>
        <end position="375"/>
    </location>
</feature>
<feature type="domain" description="TRAM" evidence="1">
    <location>
        <begin position="378"/>
        <end position="443"/>
    </location>
</feature>
<feature type="binding site" evidence="1">
    <location>
        <position position="17"/>
    </location>
    <ligand>
        <name>[4Fe-4S] cluster</name>
        <dbReference type="ChEBI" id="CHEBI:49883"/>
        <label>1</label>
    </ligand>
</feature>
<feature type="binding site" evidence="1">
    <location>
        <position position="53"/>
    </location>
    <ligand>
        <name>[4Fe-4S] cluster</name>
        <dbReference type="ChEBI" id="CHEBI:49883"/>
        <label>1</label>
    </ligand>
</feature>
<feature type="binding site" evidence="1">
    <location>
        <position position="82"/>
    </location>
    <ligand>
        <name>[4Fe-4S] cluster</name>
        <dbReference type="ChEBI" id="CHEBI:49883"/>
        <label>1</label>
    </ligand>
</feature>
<feature type="binding site" evidence="1">
    <location>
        <position position="151"/>
    </location>
    <ligand>
        <name>[4Fe-4S] cluster</name>
        <dbReference type="ChEBI" id="CHEBI:49883"/>
        <label>2</label>
        <note>4Fe-4S-S-AdoMet</note>
    </ligand>
</feature>
<feature type="binding site" evidence="1">
    <location>
        <position position="155"/>
    </location>
    <ligand>
        <name>[4Fe-4S] cluster</name>
        <dbReference type="ChEBI" id="CHEBI:49883"/>
        <label>2</label>
        <note>4Fe-4S-S-AdoMet</note>
    </ligand>
</feature>
<feature type="binding site" evidence="1">
    <location>
        <position position="158"/>
    </location>
    <ligand>
        <name>[4Fe-4S] cluster</name>
        <dbReference type="ChEBI" id="CHEBI:49883"/>
        <label>2</label>
        <note>4Fe-4S-S-AdoMet</note>
    </ligand>
</feature>
<name>RIMO_PSEP1</name>
<gene>
    <name evidence="1" type="primary">rimO</name>
    <name type="ordered locus">Pput_1228</name>
</gene>
<accession>A5VZS9</accession>
<comment type="function">
    <text evidence="1">Catalyzes the methylthiolation of an aspartic acid residue of ribosomal protein uS12.</text>
</comment>
<comment type="catalytic activity">
    <reaction evidence="1">
        <text>L-aspartate(89)-[ribosomal protein uS12]-hydrogen + (sulfur carrier)-SH + AH2 + 2 S-adenosyl-L-methionine = 3-methylsulfanyl-L-aspartate(89)-[ribosomal protein uS12]-hydrogen + (sulfur carrier)-H + 5'-deoxyadenosine + L-methionine + A + S-adenosyl-L-homocysteine + 2 H(+)</text>
        <dbReference type="Rhea" id="RHEA:37087"/>
        <dbReference type="Rhea" id="RHEA-COMP:10460"/>
        <dbReference type="Rhea" id="RHEA-COMP:10461"/>
        <dbReference type="Rhea" id="RHEA-COMP:14737"/>
        <dbReference type="Rhea" id="RHEA-COMP:14739"/>
        <dbReference type="ChEBI" id="CHEBI:13193"/>
        <dbReference type="ChEBI" id="CHEBI:15378"/>
        <dbReference type="ChEBI" id="CHEBI:17319"/>
        <dbReference type="ChEBI" id="CHEBI:17499"/>
        <dbReference type="ChEBI" id="CHEBI:29917"/>
        <dbReference type="ChEBI" id="CHEBI:29961"/>
        <dbReference type="ChEBI" id="CHEBI:57844"/>
        <dbReference type="ChEBI" id="CHEBI:57856"/>
        <dbReference type="ChEBI" id="CHEBI:59789"/>
        <dbReference type="ChEBI" id="CHEBI:64428"/>
        <dbReference type="ChEBI" id="CHEBI:73599"/>
        <dbReference type="EC" id="2.8.4.4"/>
    </reaction>
</comment>
<comment type="cofactor">
    <cofactor evidence="1">
        <name>[4Fe-4S] cluster</name>
        <dbReference type="ChEBI" id="CHEBI:49883"/>
    </cofactor>
    <text evidence="1">Binds 2 [4Fe-4S] clusters. One cluster is coordinated with 3 cysteines and an exchangeable S-adenosyl-L-methionine.</text>
</comment>
<comment type="subcellular location">
    <subcellularLocation>
        <location evidence="1">Cytoplasm</location>
    </subcellularLocation>
</comment>
<comment type="similarity">
    <text evidence="1">Belongs to the methylthiotransferase family. RimO subfamily.</text>
</comment>